<comment type="function">
    <text evidence="1">Binds unprenylated Rab proteins, presents it to the catalytic component B, and remains bound to it after the geranylgeranyl transfer reaction. The component A is thought to be regenerated by transferring its prenylated Rab to a protein acceptor (By similarity).</text>
</comment>
<comment type="interaction">
    <interactant intactId="EBI-186105">
        <id>Q9V8W3</id>
    </interactant>
    <interactant intactId="EBI-139441">
        <id>Q9VN77</id>
        <label>RabGGTa</label>
    </interactant>
    <organismsDiffer>false</organismsDiffer>
    <experiments>2</experiments>
</comment>
<comment type="interaction">
    <interactant intactId="EBI-186105">
        <id>Q9V8W3</id>
    </interactant>
    <interactant intactId="EBI-119928">
        <id>Q9W501</id>
        <label>temp</label>
    </interactant>
    <organismsDiffer>false</organismsDiffer>
    <experiments>6</experiments>
</comment>
<comment type="subcellular location">
    <subcellularLocation>
        <location evidence="3">Cytoplasm</location>
        <location evidence="3">Perinuclear region</location>
    </subcellularLocation>
    <subcellularLocation>
        <location evidence="3">Cytoplasm</location>
        <location evidence="3">Cytoskeleton</location>
        <location evidence="3">Spindle pole</location>
    </subcellularLocation>
    <text>Coordinated with the cell cycle, located around nuclei during prophase and telophase. Located to spindle poles during metaphase.</text>
</comment>
<comment type="developmental stage">
    <text evidence="3">Expressed in the syncytial embryo.</text>
</comment>
<comment type="similarity">
    <text evidence="2">Belongs to the Rab GDI family.</text>
</comment>
<feature type="chain" id="PRO_0000056691" description="Rab proteins geranylgeranyltransferase component A">
    <location>
        <begin position="1"/>
        <end position="511"/>
    </location>
</feature>
<feature type="sequence conflict" description="In Ref. 1; AAD16891." evidence="6" ref="1">
    <original>N</original>
    <variation>D</variation>
    <location>
        <position position="356"/>
    </location>
</feature>
<feature type="sequence conflict" description="In Ref. 1; AAD16891." evidence="6" ref="1">
    <original>A</original>
    <variation>V</variation>
    <location>
        <position position="393"/>
    </location>
</feature>
<sequence length="511" mass="56827">MLDDLPEQFDLVVIGTGFTESCIAAAGSRIGKSVLHLDSNEYYGDVWSSFSMDALCARLDQEVEPHSALRNARYTWHSMEKESETDAQSWNRDSVLAKSRRFSLDLCPRILYAAGELVQLLIKSNICRYAEFRAVDHVCMRHNGEIVSVPCSRSDVFNTKTLTIVEKRLLMKFLTACNDYGEDKCNEDSLEFRGRTFLEYLQAQRVTEKISSCVMQAIAMCGPSTSFEEGMQRTQRFLGSLGRYGNTPFLFPMYGCGELPQCFCRLCAVYGGIYCLKRAVDDIALDSNSNEFLLSSAGKTLRAKNVVSAPGYTPVSKGIELKPHISRGLFISSSPLGNEELNKGGGGVNLLRLLDNEGGREAFLIQLSHYTGACPEGLYIFHLTTPALSEDPASDLAIFTSQLFDQSDAQIIFSSYFTIAAQSSKSPAAEHIYYTDPPTYELDYDAAIANARDIFGKMFPDADFLPRAPDPEEIVVDGEDPSALNEHTLPEDLRAQLHDMQQATQEMDIQE</sequence>
<protein>
    <recommendedName>
        <fullName>Rab proteins geranylgeranyltransferase component A</fullName>
    </recommendedName>
    <alternativeName>
        <fullName>Rab escort protein homolog</fullName>
        <shortName>REP</shortName>
    </alternativeName>
</protein>
<evidence type="ECO:0000250" key="1"/>
<evidence type="ECO:0000255" key="2"/>
<evidence type="ECO:0000269" key="3">
    <source>
    </source>
</evidence>
<evidence type="ECO:0000269" key="4">
    <source>
    </source>
</evidence>
<evidence type="ECO:0000269" key="5">
    <source>
    </source>
</evidence>
<evidence type="ECO:0000305" key="6"/>
<evidence type="ECO:0000312" key="7">
    <source>
        <dbReference type="EMBL" id="AAD16891.1"/>
    </source>
</evidence>
<evidence type="ECO:0000312" key="8">
    <source>
        <dbReference type="EMBL" id="AAF57544.1"/>
    </source>
</evidence>
<evidence type="ECO:0000312" key="9">
    <source>
        <dbReference type="EMBL" id="AAL28600.1"/>
    </source>
</evidence>
<evidence type="ECO:0000312" key="10">
    <source>
        <dbReference type="FlyBase" id="FBgn0026378"/>
    </source>
</evidence>
<keyword id="KW-0131">Cell cycle</keyword>
<keyword id="KW-0963">Cytoplasm</keyword>
<keyword id="KW-0206">Cytoskeleton</keyword>
<keyword id="KW-0343">GTPase activation</keyword>
<keyword id="KW-1185">Reference proteome</keyword>
<reference evidence="6 7" key="1">
    <citation type="journal article" date="1999" name="Biochim. Biophys. Acta">
        <title>Antibody identification, chromosome map assignment, and sequence analysis of a Rab escort protein homolog in Drosophila.</title>
        <authorList>
            <person name="Dong H."/>
            <person name="Jin Y."/>
            <person name="Johansen J."/>
            <person name="Johansen K.M."/>
        </authorList>
    </citation>
    <scope>NUCLEOTIDE SEQUENCE [MRNA]</scope>
    <scope>SUBCELLULAR LOCATION</scope>
    <scope>DEVELOPMENTAL STAGE</scope>
</reference>
<reference evidence="8" key="2">
    <citation type="journal article" date="2000" name="Science">
        <title>The genome sequence of Drosophila melanogaster.</title>
        <authorList>
            <person name="Adams M.D."/>
            <person name="Celniker S.E."/>
            <person name="Holt R.A."/>
            <person name="Evans C.A."/>
            <person name="Gocayne J.D."/>
            <person name="Amanatides P.G."/>
            <person name="Scherer S.E."/>
            <person name="Li P.W."/>
            <person name="Hoskins R.A."/>
            <person name="Galle R.F."/>
            <person name="George R.A."/>
            <person name="Lewis S.E."/>
            <person name="Richards S."/>
            <person name="Ashburner M."/>
            <person name="Henderson S.N."/>
            <person name="Sutton G.G."/>
            <person name="Wortman J.R."/>
            <person name="Yandell M.D."/>
            <person name="Zhang Q."/>
            <person name="Chen L.X."/>
            <person name="Brandon R.C."/>
            <person name="Rogers Y.-H.C."/>
            <person name="Blazej R.G."/>
            <person name="Champe M."/>
            <person name="Pfeiffer B.D."/>
            <person name="Wan K.H."/>
            <person name="Doyle C."/>
            <person name="Baxter E.G."/>
            <person name="Helt G."/>
            <person name="Nelson C.R."/>
            <person name="Miklos G.L.G."/>
            <person name="Abril J.F."/>
            <person name="Agbayani A."/>
            <person name="An H.-J."/>
            <person name="Andrews-Pfannkoch C."/>
            <person name="Baldwin D."/>
            <person name="Ballew R.M."/>
            <person name="Basu A."/>
            <person name="Baxendale J."/>
            <person name="Bayraktaroglu L."/>
            <person name="Beasley E.M."/>
            <person name="Beeson K.Y."/>
            <person name="Benos P.V."/>
            <person name="Berman B.P."/>
            <person name="Bhandari D."/>
            <person name="Bolshakov S."/>
            <person name="Borkova D."/>
            <person name="Botchan M.R."/>
            <person name="Bouck J."/>
            <person name="Brokstein P."/>
            <person name="Brottier P."/>
            <person name="Burtis K.C."/>
            <person name="Busam D.A."/>
            <person name="Butler H."/>
            <person name="Cadieu E."/>
            <person name="Center A."/>
            <person name="Chandra I."/>
            <person name="Cherry J.M."/>
            <person name="Cawley S."/>
            <person name="Dahlke C."/>
            <person name="Davenport L.B."/>
            <person name="Davies P."/>
            <person name="de Pablos B."/>
            <person name="Delcher A."/>
            <person name="Deng Z."/>
            <person name="Mays A.D."/>
            <person name="Dew I."/>
            <person name="Dietz S.M."/>
            <person name="Dodson K."/>
            <person name="Doup L.E."/>
            <person name="Downes M."/>
            <person name="Dugan-Rocha S."/>
            <person name="Dunkov B.C."/>
            <person name="Dunn P."/>
            <person name="Durbin K.J."/>
            <person name="Evangelista C.C."/>
            <person name="Ferraz C."/>
            <person name="Ferriera S."/>
            <person name="Fleischmann W."/>
            <person name="Fosler C."/>
            <person name="Gabrielian A.E."/>
            <person name="Garg N.S."/>
            <person name="Gelbart W.M."/>
            <person name="Glasser K."/>
            <person name="Glodek A."/>
            <person name="Gong F."/>
            <person name="Gorrell J.H."/>
            <person name="Gu Z."/>
            <person name="Guan P."/>
            <person name="Harris M."/>
            <person name="Harris N.L."/>
            <person name="Harvey D.A."/>
            <person name="Heiman T.J."/>
            <person name="Hernandez J.R."/>
            <person name="Houck J."/>
            <person name="Hostin D."/>
            <person name="Houston K.A."/>
            <person name="Howland T.J."/>
            <person name="Wei M.-H."/>
            <person name="Ibegwam C."/>
            <person name="Jalali M."/>
            <person name="Kalush F."/>
            <person name="Karpen G.H."/>
            <person name="Ke Z."/>
            <person name="Kennison J.A."/>
            <person name="Ketchum K.A."/>
            <person name="Kimmel B.E."/>
            <person name="Kodira C.D."/>
            <person name="Kraft C.L."/>
            <person name="Kravitz S."/>
            <person name="Kulp D."/>
            <person name="Lai Z."/>
            <person name="Lasko P."/>
            <person name="Lei Y."/>
            <person name="Levitsky A.A."/>
            <person name="Li J.H."/>
            <person name="Li Z."/>
            <person name="Liang Y."/>
            <person name="Lin X."/>
            <person name="Liu X."/>
            <person name="Mattei B."/>
            <person name="McIntosh T.C."/>
            <person name="McLeod M.P."/>
            <person name="McPherson D."/>
            <person name="Merkulov G."/>
            <person name="Milshina N.V."/>
            <person name="Mobarry C."/>
            <person name="Morris J."/>
            <person name="Moshrefi A."/>
            <person name="Mount S.M."/>
            <person name="Moy M."/>
            <person name="Murphy B."/>
            <person name="Murphy L."/>
            <person name="Muzny D.M."/>
            <person name="Nelson D.L."/>
            <person name="Nelson D.R."/>
            <person name="Nelson K.A."/>
            <person name="Nixon K."/>
            <person name="Nusskern D.R."/>
            <person name="Pacleb J.M."/>
            <person name="Palazzolo M."/>
            <person name="Pittman G.S."/>
            <person name="Pan S."/>
            <person name="Pollard J."/>
            <person name="Puri V."/>
            <person name="Reese M.G."/>
            <person name="Reinert K."/>
            <person name="Remington K."/>
            <person name="Saunders R.D.C."/>
            <person name="Scheeler F."/>
            <person name="Shen H."/>
            <person name="Shue B.C."/>
            <person name="Siden-Kiamos I."/>
            <person name="Simpson M."/>
            <person name="Skupski M.P."/>
            <person name="Smith T.J."/>
            <person name="Spier E."/>
            <person name="Spradling A.C."/>
            <person name="Stapleton M."/>
            <person name="Strong R."/>
            <person name="Sun E."/>
            <person name="Svirskas R."/>
            <person name="Tector C."/>
            <person name="Turner R."/>
            <person name="Venter E."/>
            <person name="Wang A.H."/>
            <person name="Wang X."/>
            <person name="Wang Z.-Y."/>
            <person name="Wassarman D.A."/>
            <person name="Weinstock G.M."/>
            <person name="Weissenbach J."/>
            <person name="Williams S.M."/>
            <person name="Woodage T."/>
            <person name="Worley K.C."/>
            <person name="Wu D."/>
            <person name="Yang S."/>
            <person name="Yao Q.A."/>
            <person name="Ye J."/>
            <person name="Yeh R.-F."/>
            <person name="Zaveri J.S."/>
            <person name="Zhan M."/>
            <person name="Zhang G."/>
            <person name="Zhao Q."/>
            <person name="Zheng L."/>
            <person name="Zheng X.H."/>
            <person name="Zhong F.N."/>
            <person name="Zhong W."/>
            <person name="Zhou X."/>
            <person name="Zhu S.C."/>
            <person name="Zhu X."/>
            <person name="Smith H.O."/>
            <person name="Gibbs R.A."/>
            <person name="Myers E.W."/>
            <person name="Rubin G.M."/>
            <person name="Venter J.C."/>
        </authorList>
    </citation>
    <scope>NUCLEOTIDE SEQUENCE [LARGE SCALE GENOMIC DNA]</scope>
    <source>
        <strain evidence="4">Berkeley</strain>
    </source>
</reference>
<reference evidence="6 8" key="3">
    <citation type="journal article" date="2002" name="Genome Biol.">
        <title>Annotation of the Drosophila melanogaster euchromatic genome: a systematic review.</title>
        <authorList>
            <person name="Misra S."/>
            <person name="Crosby M.A."/>
            <person name="Mungall C.J."/>
            <person name="Matthews B.B."/>
            <person name="Campbell K.S."/>
            <person name="Hradecky P."/>
            <person name="Huang Y."/>
            <person name="Kaminker J.S."/>
            <person name="Millburn G.H."/>
            <person name="Prochnik S.E."/>
            <person name="Smith C.D."/>
            <person name="Tupy J.L."/>
            <person name="Whitfield E.J."/>
            <person name="Bayraktaroglu L."/>
            <person name="Berman B.P."/>
            <person name="Bettencourt B.R."/>
            <person name="Celniker S.E."/>
            <person name="de Grey A.D.N.J."/>
            <person name="Drysdale R.A."/>
            <person name="Harris N.L."/>
            <person name="Richter J."/>
            <person name="Russo S."/>
            <person name="Schroeder A.J."/>
            <person name="Shu S.Q."/>
            <person name="Stapleton M."/>
            <person name="Yamada C."/>
            <person name="Ashburner M."/>
            <person name="Gelbart W.M."/>
            <person name="Rubin G.M."/>
            <person name="Lewis S.E."/>
        </authorList>
    </citation>
    <scope>GENOME REANNOTATION</scope>
    <source>
        <strain>Berkeley</strain>
    </source>
</reference>
<reference evidence="9" key="4">
    <citation type="journal article" date="2002" name="Genome Biol.">
        <title>A Drosophila full-length cDNA resource.</title>
        <authorList>
            <person name="Stapleton M."/>
            <person name="Carlson J.W."/>
            <person name="Brokstein P."/>
            <person name="Yu C."/>
            <person name="Champe M."/>
            <person name="George R.A."/>
            <person name="Guarin H."/>
            <person name="Kronmiller B."/>
            <person name="Pacleb J.M."/>
            <person name="Park S."/>
            <person name="Wan K.H."/>
            <person name="Rubin G.M."/>
            <person name="Celniker S.E."/>
        </authorList>
    </citation>
    <scope>NUCLEOTIDE SEQUENCE [LARGE SCALE MRNA]</scope>
    <source>
        <strain evidence="9">Berkeley</strain>
        <tissue evidence="5">Embryo</tissue>
    </source>
</reference>
<organism>
    <name type="scientific">Drosophila melanogaster</name>
    <name type="common">Fruit fly</name>
    <dbReference type="NCBI Taxonomy" id="7227"/>
    <lineage>
        <taxon>Eukaryota</taxon>
        <taxon>Metazoa</taxon>
        <taxon>Ecdysozoa</taxon>
        <taxon>Arthropoda</taxon>
        <taxon>Hexapoda</taxon>
        <taxon>Insecta</taxon>
        <taxon>Pterygota</taxon>
        <taxon>Neoptera</taxon>
        <taxon>Endopterygota</taxon>
        <taxon>Diptera</taxon>
        <taxon>Brachycera</taxon>
        <taxon>Muscomorpha</taxon>
        <taxon>Ephydroidea</taxon>
        <taxon>Drosophilidae</taxon>
        <taxon>Drosophila</taxon>
        <taxon>Sophophora</taxon>
    </lineage>
</organism>
<proteinExistence type="evidence at protein level"/>
<accession>Q9V8W3</accession>
<accession>O97142</accession>
<dbReference type="EMBL" id="AF105063">
    <property type="protein sequence ID" value="AAD16891.1"/>
    <property type="molecule type" value="mRNA"/>
</dbReference>
<dbReference type="EMBL" id="AE013599">
    <property type="protein sequence ID" value="AAF57544.1"/>
    <property type="molecule type" value="Genomic_DNA"/>
</dbReference>
<dbReference type="EMBL" id="AY061052">
    <property type="protein sequence ID" value="AAL28600.1"/>
    <property type="molecule type" value="mRNA"/>
</dbReference>
<dbReference type="RefSeq" id="NP_477420.1">
    <property type="nucleotide sequence ID" value="NM_058072.4"/>
</dbReference>
<dbReference type="SMR" id="Q9V8W3"/>
<dbReference type="BioGRID" id="62904">
    <property type="interactions" value="5"/>
</dbReference>
<dbReference type="FunCoup" id="Q9V8W3">
    <property type="interactions" value="505"/>
</dbReference>
<dbReference type="IntAct" id="Q9V8W3">
    <property type="interactions" value="4"/>
</dbReference>
<dbReference type="STRING" id="7227.FBpp0085658"/>
<dbReference type="PaxDb" id="7227-FBpp0085658"/>
<dbReference type="EnsemblMetazoa" id="FBtr0086462">
    <property type="protein sequence ID" value="FBpp0085658"/>
    <property type="gene ID" value="FBgn0026378"/>
</dbReference>
<dbReference type="GeneID" id="37246"/>
<dbReference type="KEGG" id="dme:Dmel_CG8432"/>
<dbReference type="AGR" id="FB:FBgn0026378"/>
<dbReference type="CTD" id="37246"/>
<dbReference type="FlyBase" id="FBgn0026378">
    <property type="gene designation" value="Rep"/>
</dbReference>
<dbReference type="VEuPathDB" id="VectorBase:FBgn0026378"/>
<dbReference type="eggNOG" id="KOG4405">
    <property type="taxonomic scope" value="Eukaryota"/>
</dbReference>
<dbReference type="GeneTree" id="ENSGT00950000182994"/>
<dbReference type="HOGENOM" id="CLU_021695_4_1_1"/>
<dbReference type="InParanoid" id="Q9V8W3"/>
<dbReference type="OMA" id="LMKFLTA"/>
<dbReference type="OrthoDB" id="1923006at2759"/>
<dbReference type="PhylomeDB" id="Q9V8W3"/>
<dbReference type="Reactome" id="R-DME-6803205">
    <property type="pathway name" value="TP53 regulates transcription of several additional cell death genes whose specific roles in p53-dependent apoptosis remain uncertain"/>
</dbReference>
<dbReference type="Reactome" id="R-DME-8873719">
    <property type="pathway name" value="RAB geranylgeranylation"/>
</dbReference>
<dbReference type="Reactome" id="R-DME-8876198">
    <property type="pathway name" value="RAB GEFs exchange GTP for GDP on RABs"/>
</dbReference>
<dbReference type="BioGRID-ORCS" id="37246">
    <property type="hits" value="0 hits in 3 CRISPR screens"/>
</dbReference>
<dbReference type="GenomeRNAi" id="37246"/>
<dbReference type="PRO" id="PR:Q9V8W3"/>
<dbReference type="Proteomes" id="UP000000803">
    <property type="component" value="Chromosome 2R"/>
</dbReference>
<dbReference type="Bgee" id="FBgn0026378">
    <property type="expression patterns" value="Expressed in oviduct (Drosophila) and 60 other cell types or tissues"/>
</dbReference>
<dbReference type="GO" id="GO:0005818">
    <property type="term" value="C:aster"/>
    <property type="evidence" value="ECO:0000314"/>
    <property type="project" value="UniProtKB"/>
</dbReference>
<dbReference type="GO" id="GO:0005737">
    <property type="term" value="C:cytoplasm"/>
    <property type="evidence" value="ECO:0000250"/>
    <property type="project" value="UniProtKB"/>
</dbReference>
<dbReference type="GO" id="GO:0005829">
    <property type="term" value="C:cytosol"/>
    <property type="evidence" value="ECO:0000318"/>
    <property type="project" value="GO_Central"/>
</dbReference>
<dbReference type="GO" id="GO:0016020">
    <property type="term" value="C:membrane"/>
    <property type="evidence" value="ECO:0000250"/>
    <property type="project" value="UniProtKB"/>
</dbReference>
<dbReference type="GO" id="GO:0005634">
    <property type="term" value="C:nucleus"/>
    <property type="evidence" value="ECO:0000318"/>
    <property type="project" value="GO_Central"/>
</dbReference>
<dbReference type="GO" id="GO:0048471">
    <property type="term" value="C:perinuclear region of cytoplasm"/>
    <property type="evidence" value="ECO:0000314"/>
    <property type="project" value="UniProtKB"/>
</dbReference>
<dbReference type="GO" id="GO:0005968">
    <property type="term" value="C:Rab-protein geranylgeranyltransferase complex"/>
    <property type="evidence" value="ECO:0000314"/>
    <property type="project" value="FlyBase"/>
</dbReference>
<dbReference type="GO" id="GO:0000922">
    <property type="term" value="C:spindle pole"/>
    <property type="evidence" value="ECO:0000314"/>
    <property type="project" value="UniProtKB"/>
</dbReference>
<dbReference type="GO" id="GO:0008021">
    <property type="term" value="C:synaptic vesicle"/>
    <property type="evidence" value="ECO:0000303"/>
    <property type="project" value="FlyBase"/>
</dbReference>
<dbReference type="GO" id="GO:0005092">
    <property type="term" value="F:GDP-dissociation inhibitor activity"/>
    <property type="evidence" value="ECO:0007669"/>
    <property type="project" value="InterPro"/>
</dbReference>
<dbReference type="GO" id="GO:0005096">
    <property type="term" value="F:GTPase activator activity"/>
    <property type="evidence" value="ECO:0007669"/>
    <property type="project" value="UniProtKB-KW"/>
</dbReference>
<dbReference type="GO" id="GO:0006886">
    <property type="term" value="P:intracellular protein transport"/>
    <property type="evidence" value="ECO:0007669"/>
    <property type="project" value="InterPro"/>
</dbReference>
<dbReference type="GO" id="GO:0007269">
    <property type="term" value="P:neurotransmitter secretion"/>
    <property type="evidence" value="ECO:0000303"/>
    <property type="project" value="FlyBase"/>
</dbReference>
<dbReference type="GO" id="GO:1905552">
    <property type="term" value="P:positive regulation of protein localization to endoplasmic reticulum"/>
    <property type="evidence" value="ECO:0000315"/>
    <property type="project" value="FlyBase"/>
</dbReference>
<dbReference type="GO" id="GO:0007264">
    <property type="term" value="P:small GTPase-mediated signal transduction"/>
    <property type="evidence" value="ECO:0007669"/>
    <property type="project" value="InterPro"/>
</dbReference>
<dbReference type="GO" id="GO:0016192">
    <property type="term" value="P:vesicle-mediated transport"/>
    <property type="evidence" value="ECO:0000318"/>
    <property type="project" value="GO_Central"/>
</dbReference>
<dbReference type="FunFam" id="1.10.405.10:FF:000003">
    <property type="entry name" value="Rab proteins geranylgeranyltransferase component A"/>
    <property type="match status" value="1"/>
</dbReference>
<dbReference type="Gene3D" id="3.50.50.60">
    <property type="entry name" value="FAD/NAD(P)-binding domain"/>
    <property type="match status" value="1"/>
</dbReference>
<dbReference type="Gene3D" id="1.10.405.10">
    <property type="entry name" value="Guanine Nucleotide Dissociation Inhibitor, domain 1"/>
    <property type="match status" value="1"/>
</dbReference>
<dbReference type="Gene3D" id="3.30.519.10">
    <property type="entry name" value="Guanine Nucleotide Dissociation Inhibitor, domain 2"/>
    <property type="match status" value="1"/>
</dbReference>
<dbReference type="InterPro" id="IPR036188">
    <property type="entry name" value="FAD/NAD-bd_sf"/>
</dbReference>
<dbReference type="InterPro" id="IPR018203">
    <property type="entry name" value="GDP_dissociation_inhibitor"/>
</dbReference>
<dbReference type="InterPro" id="IPR001738">
    <property type="entry name" value="Rab_escort"/>
</dbReference>
<dbReference type="PANTHER" id="PTHR11787:SF4">
    <property type="entry name" value="CHM, RAB ESCORT PROTEIN 1"/>
    <property type="match status" value="1"/>
</dbReference>
<dbReference type="PANTHER" id="PTHR11787">
    <property type="entry name" value="RAB GDP-DISSOCIATION INHIBITOR"/>
    <property type="match status" value="1"/>
</dbReference>
<dbReference type="Pfam" id="PF00996">
    <property type="entry name" value="GDI"/>
    <property type="match status" value="2"/>
</dbReference>
<dbReference type="PIRSF" id="PIRSF016550">
    <property type="entry name" value="Rab_ger_ger_transf_A_euk"/>
    <property type="match status" value="1"/>
</dbReference>
<dbReference type="PRINTS" id="PR00891">
    <property type="entry name" value="RABGDIREP"/>
</dbReference>
<dbReference type="SUPFAM" id="SSF51905">
    <property type="entry name" value="FAD/NAD(P)-binding domain"/>
    <property type="match status" value="1"/>
</dbReference>
<gene>
    <name evidence="10" type="primary">Rep</name>
    <name type="ORF">CG8432</name>
</gene>
<name>RABEP_DROME</name>